<name>RS1_CHLMU</name>
<gene>
    <name type="primary">rpsA</name>
    <name type="ordered locus">TC_0373</name>
</gene>
<comment type="function">
    <text evidence="1">Binds mRNA; thus facilitating recognition of the initiation point. It is needed to translate mRNA with a short Shine-Dalgarno (SD) purine-rich sequence (By similarity).</text>
</comment>
<comment type="similarity">
    <text evidence="3">Belongs to the bacterial ribosomal protein bS1 family.</text>
</comment>
<comment type="sequence caution" evidence="3">
    <conflict type="erroneous initiation">
        <sequence resource="EMBL-CDS" id="AAF39231"/>
    </conflict>
</comment>
<organism>
    <name type="scientific">Chlamydia muridarum (strain MoPn / Nigg)</name>
    <dbReference type="NCBI Taxonomy" id="243161"/>
    <lineage>
        <taxon>Bacteria</taxon>
        <taxon>Pseudomonadati</taxon>
        <taxon>Chlamydiota</taxon>
        <taxon>Chlamydiia</taxon>
        <taxon>Chlamydiales</taxon>
        <taxon>Chlamydiaceae</taxon>
        <taxon>Chlamydia/Chlamydophila group</taxon>
        <taxon>Chlamydia</taxon>
    </lineage>
</organism>
<accession>P38016</accession>
<feature type="chain" id="PRO_0000196030" description="Small ribosomal subunit protein bS1">
    <location>
        <begin position="1"/>
        <end position="570"/>
    </location>
</feature>
<feature type="domain" description="S1 motif 1" evidence="2">
    <location>
        <begin position="52"/>
        <end position="116"/>
    </location>
</feature>
<feature type="domain" description="S1 motif 2" evidence="2">
    <location>
        <begin position="134"/>
        <end position="199"/>
    </location>
</feature>
<feature type="domain" description="S1 motif 3" evidence="2">
    <location>
        <begin position="220"/>
        <end position="288"/>
    </location>
</feature>
<feature type="domain" description="S1 motif 4" evidence="2">
    <location>
        <begin position="305"/>
        <end position="375"/>
    </location>
</feature>
<feature type="domain" description="S1 motif 5" evidence="2">
    <location>
        <begin position="392"/>
        <end position="462"/>
    </location>
</feature>
<feature type="domain" description="S1 motif 6" evidence="2">
    <location>
        <begin position="479"/>
        <end position="548"/>
    </location>
</feature>
<feature type="sequence conflict" description="In Ref. 2; AAA23167." evidence="3" ref="2">
    <original>G</original>
    <variation>A</variation>
    <location>
        <position position="139"/>
    </location>
</feature>
<feature type="sequence conflict" description="In Ref. 2; AAA23167." evidence="3" ref="2">
    <original>R</original>
    <variation>P</variation>
    <location>
        <position position="143"/>
    </location>
</feature>
<feature type="sequence conflict" description="In Ref. 2; AAA23167." evidence="3" ref="2">
    <original>GKVC</original>
    <variation>RESL</variation>
    <location>
        <begin position="177"/>
        <end position="180"/>
    </location>
</feature>
<proteinExistence type="inferred from homology"/>
<evidence type="ECO:0000250" key="1"/>
<evidence type="ECO:0000255" key="2">
    <source>
        <dbReference type="PROSITE-ProRule" id="PRU00180"/>
    </source>
</evidence>
<evidence type="ECO:0000305" key="3"/>
<dbReference type="EMBL" id="AE002160">
    <property type="protein sequence ID" value="AAF39231.1"/>
    <property type="status" value="ALT_INIT"/>
    <property type="molecule type" value="Genomic_DNA"/>
</dbReference>
<dbReference type="EMBL" id="M23000">
    <property type="protein sequence ID" value="AAA23167.1"/>
    <property type="molecule type" value="Genomic_DNA"/>
</dbReference>
<dbReference type="PIR" id="A32246">
    <property type="entry name" value="A32246"/>
</dbReference>
<dbReference type="PIR" id="A81710">
    <property type="entry name" value="A81710"/>
</dbReference>
<dbReference type="RefSeq" id="WP_010230276.1">
    <property type="nucleotide sequence ID" value="NZ_CP063055.1"/>
</dbReference>
<dbReference type="SMR" id="P38016"/>
<dbReference type="GeneID" id="1245725"/>
<dbReference type="KEGG" id="cmu:TC_0373"/>
<dbReference type="eggNOG" id="COG0539">
    <property type="taxonomic scope" value="Bacteria"/>
</dbReference>
<dbReference type="HOGENOM" id="CLU_015805_2_1_0"/>
<dbReference type="OrthoDB" id="9804077at2"/>
<dbReference type="Proteomes" id="UP000000800">
    <property type="component" value="Chromosome"/>
</dbReference>
<dbReference type="GO" id="GO:0022627">
    <property type="term" value="C:cytosolic small ribosomal subunit"/>
    <property type="evidence" value="ECO:0007669"/>
    <property type="project" value="TreeGrafter"/>
</dbReference>
<dbReference type="GO" id="GO:0003729">
    <property type="term" value="F:mRNA binding"/>
    <property type="evidence" value="ECO:0007669"/>
    <property type="project" value="TreeGrafter"/>
</dbReference>
<dbReference type="GO" id="GO:0003735">
    <property type="term" value="F:structural constituent of ribosome"/>
    <property type="evidence" value="ECO:0007669"/>
    <property type="project" value="InterPro"/>
</dbReference>
<dbReference type="GO" id="GO:0006412">
    <property type="term" value="P:translation"/>
    <property type="evidence" value="ECO:0007669"/>
    <property type="project" value="InterPro"/>
</dbReference>
<dbReference type="CDD" id="cd05687">
    <property type="entry name" value="S1_RPS1_repeat_ec1_hs1"/>
    <property type="match status" value="1"/>
</dbReference>
<dbReference type="CDD" id="cd04465">
    <property type="entry name" value="S1_RPS1_repeat_ec2_hs2"/>
    <property type="match status" value="1"/>
</dbReference>
<dbReference type="CDD" id="cd05688">
    <property type="entry name" value="S1_RPS1_repeat_ec3"/>
    <property type="match status" value="1"/>
</dbReference>
<dbReference type="FunFam" id="2.40.50.140:FF:000011">
    <property type="entry name" value="30S ribosomal protein S1"/>
    <property type="match status" value="2"/>
</dbReference>
<dbReference type="FunFam" id="2.40.50.140:FF:000018">
    <property type="entry name" value="30S ribosomal protein S1"/>
    <property type="match status" value="1"/>
</dbReference>
<dbReference type="FunFam" id="2.40.50.140:FF:000110">
    <property type="entry name" value="30S ribosomal protein S1"/>
    <property type="match status" value="1"/>
</dbReference>
<dbReference type="FunFam" id="2.40.50.140:FF:000103">
    <property type="entry name" value="protein RRP5 homolog"/>
    <property type="match status" value="1"/>
</dbReference>
<dbReference type="Gene3D" id="2.40.50.140">
    <property type="entry name" value="Nucleic acid-binding proteins"/>
    <property type="match status" value="6"/>
</dbReference>
<dbReference type="InterPro" id="IPR012340">
    <property type="entry name" value="NA-bd_OB-fold"/>
</dbReference>
<dbReference type="InterPro" id="IPR050437">
    <property type="entry name" value="Ribos_protein_bS1-like"/>
</dbReference>
<dbReference type="InterPro" id="IPR000110">
    <property type="entry name" value="Ribosomal_bS1"/>
</dbReference>
<dbReference type="InterPro" id="IPR035104">
    <property type="entry name" value="Ribosomal_protein_S1-like"/>
</dbReference>
<dbReference type="InterPro" id="IPR003029">
    <property type="entry name" value="S1_domain"/>
</dbReference>
<dbReference type="NCBIfam" id="NF004953">
    <property type="entry name" value="PRK06299.1-3"/>
    <property type="match status" value="1"/>
</dbReference>
<dbReference type="NCBIfam" id="TIGR00717">
    <property type="entry name" value="rpsA"/>
    <property type="match status" value="1"/>
</dbReference>
<dbReference type="PANTHER" id="PTHR10724">
    <property type="entry name" value="30S RIBOSOMAL PROTEIN S1"/>
    <property type="match status" value="1"/>
</dbReference>
<dbReference type="PANTHER" id="PTHR10724:SF7">
    <property type="entry name" value="SMALL RIBOSOMAL SUBUNIT PROTEIN BS1C"/>
    <property type="match status" value="1"/>
</dbReference>
<dbReference type="Pfam" id="PF00575">
    <property type="entry name" value="S1"/>
    <property type="match status" value="6"/>
</dbReference>
<dbReference type="PIRSF" id="PIRSF002111">
    <property type="entry name" value="RpsA"/>
    <property type="match status" value="1"/>
</dbReference>
<dbReference type="PRINTS" id="PR00681">
    <property type="entry name" value="RIBOSOMALS1"/>
</dbReference>
<dbReference type="SMART" id="SM00316">
    <property type="entry name" value="S1"/>
    <property type="match status" value="6"/>
</dbReference>
<dbReference type="SUPFAM" id="SSF50249">
    <property type="entry name" value="Nucleic acid-binding proteins"/>
    <property type="match status" value="6"/>
</dbReference>
<dbReference type="PROSITE" id="PS50126">
    <property type="entry name" value="S1"/>
    <property type="match status" value="6"/>
</dbReference>
<sequence length="570" mass="63610">MPKQADYTWGAKKNLDTIACLPEDVKQFKDLLYAMHGFTATEEEPTSEVQPGAILKGTVVDISKDFVVVDVGLKSEGVIPMSEFIDSSEGLSVGAEVEVYLDQTEDEEGKVVLSREKATRQRQWEYILAHCEEGSIVKGQITRKVKGGLIVDIGMEAFLPGSQIDNKKIKNLDDYVGKVCEFKILKINVDRRNVVVSRRELLEAERISKKAELIEQITIGERRKGIVKNITDFGVFLDLDGIDGLLHITDMTWKRIRHPSEMVELNQELEVIILSVDKEKGRVALGLKQKEHNPWEDIEKKYPPGKRVRGKIVKLLPYGAFIEIEEGIEGLIHVSEMSWVKNIVDPNEVVNKGDEVEVVVLSIQKDEGKISLGLKQTEHNPWDNIEEKYPIGLRVTAEIKNLTNYGAFVELEPGIEGLIHISDMSWIKKVSHPSELFKKGNTVEAVILSVDKESKKITLGVKQLTPNPWDEIEAMFPVGSDISGIVTKITAFGAFVELQNGIEGLIHVSKLSDKPFAKIEDILSIGDKVSAKVIKLDPDHKKVSLSIKEFLAHGGHAGQDAEEETSSNRD</sequence>
<protein>
    <recommendedName>
        <fullName evidence="3">Small ribosomal subunit protein bS1</fullName>
    </recommendedName>
    <alternativeName>
        <fullName>30S ribosomal protein S1</fullName>
    </alternativeName>
    <alternativeName>
        <fullName>70 kDa antigen</fullName>
    </alternativeName>
</protein>
<reference key="1">
    <citation type="journal article" date="2000" name="Nucleic Acids Res.">
        <title>Genome sequences of Chlamydia trachomatis MoPn and Chlamydia pneumoniae AR39.</title>
        <authorList>
            <person name="Read T.D."/>
            <person name="Brunham R.C."/>
            <person name="Shen C."/>
            <person name="Gill S.R."/>
            <person name="Heidelberg J.F."/>
            <person name="White O."/>
            <person name="Hickey E.K."/>
            <person name="Peterson J.D."/>
            <person name="Utterback T.R."/>
            <person name="Berry K.J."/>
            <person name="Bass S."/>
            <person name="Linher K.D."/>
            <person name="Weidman J.F."/>
            <person name="Khouri H.M."/>
            <person name="Craven B."/>
            <person name="Bowman C."/>
            <person name="Dodson R.J."/>
            <person name="Gwinn M.L."/>
            <person name="Nelson W.C."/>
            <person name="DeBoy R.T."/>
            <person name="Kolonay J.F."/>
            <person name="McClarty G."/>
            <person name="Salzberg S.L."/>
            <person name="Eisen J.A."/>
            <person name="Fraser C.M."/>
        </authorList>
    </citation>
    <scope>NUCLEOTIDE SEQUENCE [LARGE SCALE GENOMIC DNA]</scope>
    <source>
        <strain>MoPn / Nigg</strain>
    </source>
</reference>
<reference key="2">
    <citation type="journal article" date="1989" name="J. Bacteriol.">
        <title>Chlamydial gene encoding a 70-kilodalton antigen in Escherichia coli: analysis of expression signals and identification of the gene product.</title>
        <authorList>
            <person name="Sardinia L.M."/>
            <person name="Engel J.N."/>
            <person name="Ganem D."/>
        </authorList>
    </citation>
    <scope>NUCLEOTIDE SEQUENCE [GENOMIC DNA] OF 1-180</scope>
    <source>
        <strain>MoPn</strain>
    </source>
</reference>
<keyword id="KW-0677">Repeat</keyword>
<keyword id="KW-0687">Ribonucleoprotein</keyword>
<keyword id="KW-0689">Ribosomal protein</keyword>
<keyword id="KW-0694">RNA-binding</keyword>